<protein>
    <recommendedName>
        <fullName>Orotidine 5'-phosphate decarboxylase</fullName>
        <ecNumber>4.1.1.23</ecNumber>
    </recommendedName>
    <alternativeName>
        <fullName>OMP decarboxylase</fullName>
        <shortName>OMPDCase</shortName>
        <shortName>OMPdecase</shortName>
    </alternativeName>
    <alternativeName>
        <fullName>Uridine 5'-monophosphate synthase</fullName>
        <shortName>UMP synthase</shortName>
    </alternativeName>
</protein>
<accession>P15188</accession>
<accession>A0A0D1DTT3</accession>
<accession>Q4P6P9</accession>
<reference key="1">
    <citation type="journal article" date="1989" name="Gene">
        <title>Isolation of metabolic genes and demonstration of gene disruption in the phytopathogenic fungus Ustilago maydis.</title>
        <authorList>
            <person name="Kronstad J.W."/>
            <person name="Wang J."/>
            <person name="Covert S.F."/>
            <person name="Holden D.W."/>
            <person name="McKnight G.L."/>
            <person name="Leong S.A."/>
        </authorList>
    </citation>
    <scope>NUCLEOTIDE SEQUENCE [MRNA]</scope>
</reference>
<reference key="2">
    <citation type="journal article" date="2006" name="Nature">
        <title>Insights from the genome of the biotrophic fungal plant pathogen Ustilago maydis.</title>
        <authorList>
            <person name="Kaemper J."/>
            <person name="Kahmann R."/>
            <person name="Boelker M."/>
            <person name="Ma L.-J."/>
            <person name="Brefort T."/>
            <person name="Saville B.J."/>
            <person name="Banuett F."/>
            <person name="Kronstad J.W."/>
            <person name="Gold S.E."/>
            <person name="Mueller O."/>
            <person name="Perlin M.H."/>
            <person name="Woesten H.A.B."/>
            <person name="de Vries R."/>
            <person name="Ruiz-Herrera J."/>
            <person name="Reynaga-Pena C.G."/>
            <person name="Snetselaar K."/>
            <person name="McCann M."/>
            <person name="Perez-Martin J."/>
            <person name="Feldbruegge M."/>
            <person name="Basse C.W."/>
            <person name="Steinberg G."/>
            <person name="Ibeas J.I."/>
            <person name="Holloman W."/>
            <person name="Guzman P."/>
            <person name="Farman M.L."/>
            <person name="Stajich J.E."/>
            <person name="Sentandreu R."/>
            <person name="Gonzalez-Prieto J.M."/>
            <person name="Kennell J.C."/>
            <person name="Molina L."/>
            <person name="Schirawski J."/>
            <person name="Mendoza-Mendoza A."/>
            <person name="Greilinger D."/>
            <person name="Muench K."/>
            <person name="Roessel N."/>
            <person name="Scherer M."/>
            <person name="Vranes M."/>
            <person name="Ladendorf O."/>
            <person name="Vincon V."/>
            <person name="Fuchs U."/>
            <person name="Sandrock B."/>
            <person name="Meng S."/>
            <person name="Ho E.C.H."/>
            <person name="Cahill M.J."/>
            <person name="Boyce K.J."/>
            <person name="Klose J."/>
            <person name="Klosterman S.J."/>
            <person name="Deelstra H.J."/>
            <person name="Ortiz-Castellanos L."/>
            <person name="Li W."/>
            <person name="Sanchez-Alonso P."/>
            <person name="Schreier P.H."/>
            <person name="Haeuser-Hahn I."/>
            <person name="Vaupel M."/>
            <person name="Koopmann E."/>
            <person name="Friedrich G."/>
            <person name="Voss H."/>
            <person name="Schlueter T."/>
            <person name="Margolis J."/>
            <person name="Platt D."/>
            <person name="Swimmer C."/>
            <person name="Gnirke A."/>
            <person name="Chen F."/>
            <person name="Vysotskaia V."/>
            <person name="Mannhaupt G."/>
            <person name="Gueldener U."/>
            <person name="Muensterkoetter M."/>
            <person name="Haase D."/>
            <person name="Oesterheld M."/>
            <person name="Mewes H.-W."/>
            <person name="Mauceli E.W."/>
            <person name="DeCaprio D."/>
            <person name="Wade C.M."/>
            <person name="Butler J."/>
            <person name="Young S.K."/>
            <person name="Jaffe D.B."/>
            <person name="Calvo S.E."/>
            <person name="Nusbaum C."/>
            <person name="Galagan J.E."/>
            <person name="Birren B.W."/>
        </authorList>
    </citation>
    <scope>NUCLEOTIDE SEQUENCE [LARGE SCALE GENOMIC DNA]</scope>
    <source>
        <strain>DSM 14603 / FGSC 9021 / UM521</strain>
    </source>
</reference>
<reference key="3">
    <citation type="submission" date="2014-09" db="EMBL/GenBank/DDBJ databases">
        <authorList>
            <person name="Gueldener U."/>
            <person name="Muensterkoetter M."/>
            <person name="Walter M.C."/>
            <person name="Mannhaupt G."/>
            <person name="Kahmann R."/>
        </authorList>
    </citation>
    <scope>GENOME REANNOTATION</scope>
    <source>
        <strain>DSM 14603 / FGSC 9021 / UM521</strain>
    </source>
</reference>
<organism>
    <name type="scientific">Mycosarcoma maydis</name>
    <name type="common">Corn smut fungus</name>
    <name type="synonym">Ustilago maydis</name>
    <dbReference type="NCBI Taxonomy" id="5270"/>
    <lineage>
        <taxon>Eukaryota</taxon>
        <taxon>Fungi</taxon>
        <taxon>Dikarya</taxon>
        <taxon>Basidiomycota</taxon>
        <taxon>Ustilaginomycotina</taxon>
        <taxon>Ustilaginomycetes</taxon>
        <taxon>Ustilaginales</taxon>
        <taxon>Ustilaginaceae</taxon>
        <taxon>Mycosarcoma</taxon>
    </lineage>
</organism>
<gene>
    <name type="primary">PYR6</name>
    <name type="ORF">UMAG_04214</name>
</gene>
<proteinExistence type="evidence at transcript level"/>
<keyword id="KW-0210">Decarboxylase</keyword>
<keyword id="KW-0456">Lyase</keyword>
<keyword id="KW-0665">Pyrimidine biosynthesis</keyword>
<keyword id="KW-1185">Reference proteome</keyword>
<sequence length="283" mass="30864">MSSITLQSYASRAAKQPNPAAKALLECMERKQTNLCVSIDVTNKQDLLDVCEAVGRNVCLVKTHIDIVEDFDMDLVHQLTQLSEKHDFLIFEDRKFADIGNTVSLQYSAGVHKIASWSHITNAHLVPGPSVISGLAKVGQPLGRGLLLLAEMSSEGALTKGDYTQACVDEAHKDTTGFVCGFIAMSRVDERERANTHRDLLILTPGVGLDVKGDGLGQQYRTPDQVIRESGCDVIIVGRGIYGALTTEEGKADKKAAFAKVSEQGERYKTAGWDAYLKRIGQK</sequence>
<comment type="catalytic activity">
    <reaction evidence="2">
        <text>orotidine 5'-phosphate + H(+) = UMP + CO2</text>
        <dbReference type="Rhea" id="RHEA:11596"/>
        <dbReference type="ChEBI" id="CHEBI:15378"/>
        <dbReference type="ChEBI" id="CHEBI:16526"/>
        <dbReference type="ChEBI" id="CHEBI:57538"/>
        <dbReference type="ChEBI" id="CHEBI:57865"/>
        <dbReference type="EC" id="4.1.1.23"/>
    </reaction>
</comment>
<comment type="pathway">
    <text>Pyrimidine metabolism; UMP biosynthesis via de novo pathway; UMP from orotate: step 2/2.</text>
</comment>
<comment type="similarity">
    <text evidence="3">Belongs to the OMP decarboxylase family.</text>
</comment>
<dbReference type="EC" id="4.1.1.23"/>
<dbReference type="EMBL" id="M27247">
    <property type="status" value="NOT_ANNOTATED_CDS"/>
    <property type="molecule type" value="Unassigned_DNA"/>
</dbReference>
<dbReference type="EMBL" id="CM003151">
    <property type="protein sequence ID" value="KIS67714.1"/>
    <property type="molecule type" value="Genomic_DNA"/>
</dbReference>
<dbReference type="PIR" id="JQ0013">
    <property type="entry name" value="DCUSOP"/>
</dbReference>
<dbReference type="RefSeq" id="XP_011390696.1">
    <property type="nucleotide sequence ID" value="XM_011392394.1"/>
</dbReference>
<dbReference type="SMR" id="P15188"/>
<dbReference type="FunCoup" id="P15188">
    <property type="interactions" value="754"/>
</dbReference>
<dbReference type="STRING" id="237631.P15188"/>
<dbReference type="EnsemblFungi" id="KIS67714">
    <property type="protein sequence ID" value="KIS67714"/>
    <property type="gene ID" value="UMAG_04214"/>
</dbReference>
<dbReference type="GeneID" id="23564467"/>
<dbReference type="KEGG" id="uma:UMAG_04214"/>
<dbReference type="VEuPathDB" id="FungiDB:UMAG_04214"/>
<dbReference type="eggNOG" id="KOG1377">
    <property type="taxonomic scope" value="Eukaryota"/>
</dbReference>
<dbReference type="HOGENOM" id="CLU_030821_0_0_1"/>
<dbReference type="InParanoid" id="P15188"/>
<dbReference type="OMA" id="CLIKTHI"/>
<dbReference type="OrthoDB" id="10263753at2759"/>
<dbReference type="UniPathway" id="UPA00070">
    <property type="reaction ID" value="UER00120"/>
</dbReference>
<dbReference type="Proteomes" id="UP000000561">
    <property type="component" value="Chromosome 12"/>
</dbReference>
<dbReference type="GO" id="GO:0005829">
    <property type="term" value="C:cytosol"/>
    <property type="evidence" value="ECO:0000318"/>
    <property type="project" value="GO_Central"/>
</dbReference>
<dbReference type="GO" id="GO:0004590">
    <property type="term" value="F:orotidine-5'-phosphate decarboxylase activity"/>
    <property type="evidence" value="ECO:0000318"/>
    <property type="project" value="GO_Central"/>
</dbReference>
<dbReference type="GO" id="GO:0006207">
    <property type="term" value="P:'de novo' pyrimidine nucleobase biosynthetic process"/>
    <property type="evidence" value="ECO:0000318"/>
    <property type="project" value="GO_Central"/>
</dbReference>
<dbReference type="GO" id="GO:0044205">
    <property type="term" value="P:'de novo' UMP biosynthetic process"/>
    <property type="evidence" value="ECO:0007669"/>
    <property type="project" value="UniProtKB-UniPathway"/>
</dbReference>
<dbReference type="CDD" id="cd04725">
    <property type="entry name" value="OMP_decarboxylase_like"/>
    <property type="match status" value="1"/>
</dbReference>
<dbReference type="FunFam" id="3.20.20.70:FF:000114">
    <property type="entry name" value="Decarboxylase,orotidine phosphate"/>
    <property type="match status" value="1"/>
</dbReference>
<dbReference type="Gene3D" id="3.20.20.70">
    <property type="entry name" value="Aldolase class I"/>
    <property type="match status" value="1"/>
</dbReference>
<dbReference type="InterPro" id="IPR013785">
    <property type="entry name" value="Aldolase_TIM"/>
</dbReference>
<dbReference type="InterPro" id="IPR014732">
    <property type="entry name" value="OMPdecase"/>
</dbReference>
<dbReference type="InterPro" id="IPR018089">
    <property type="entry name" value="OMPdecase_AS"/>
</dbReference>
<dbReference type="InterPro" id="IPR001754">
    <property type="entry name" value="OMPdeCOase_dom"/>
</dbReference>
<dbReference type="InterPro" id="IPR011060">
    <property type="entry name" value="RibuloseP-bd_barrel"/>
</dbReference>
<dbReference type="NCBIfam" id="TIGR01740">
    <property type="entry name" value="pyrF"/>
    <property type="match status" value="1"/>
</dbReference>
<dbReference type="PANTHER" id="PTHR32119">
    <property type="entry name" value="OROTIDINE 5'-PHOSPHATE DECARBOXYLASE"/>
    <property type="match status" value="1"/>
</dbReference>
<dbReference type="PANTHER" id="PTHR32119:SF2">
    <property type="entry name" value="OROTIDINE 5'-PHOSPHATE DECARBOXYLASE"/>
    <property type="match status" value="1"/>
</dbReference>
<dbReference type="Pfam" id="PF00215">
    <property type="entry name" value="OMPdecase"/>
    <property type="match status" value="1"/>
</dbReference>
<dbReference type="SMART" id="SM00934">
    <property type="entry name" value="OMPdecase"/>
    <property type="match status" value="1"/>
</dbReference>
<dbReference type="SUPFAM" id="SSF51366">
    <property type="entry name" value="Ribulose-phoshate binding barrel"/>
    <property type="match status" value="1"/>
</dbReference>
<dbReference type="PROSITE" id="PS00156">
    <property type="entry name" value="OMPDECASE"/>
    <property type="match status" value="1"/>
</dbReference>
<evidence type="ECO:0000250" key="1"/>
<evidence type="ECO:0000255" key="2">
    <source>
        <dbReference type="PROSITE-ProRule" id="PRU10110"/>
    </source>
</evidence>
<evidence type="ECO:0000305" key="3"/>
<feature type="chain" id="PRO_0000134689" description="Orotidine 5'-phosphate decarboxylase">
    <location>
        <begin position="1"/>
        <end position="283"/>
    </location>
</feature>
<feature type="active site" description="Proton donor" evidence="2">
    <location>
        <position position="95"/>
    </location>
</feature>
<feature type="binding site" evidence="1">
    <location>
        <position position="40"/>
    </location>
    <ligand>
        <name>substrate</name>
    </ligand>
</feature>
<feature type="binding site" evidence="1">
    <location>
        <begin position="62"/>
        <end position="64"/>
    </location>
    <ligand>
        <name>substrate</name>
    </ligand>
</feature>
<feature type="binding site" evidence="1">
    <location>
        <begin position="93"/>
        <end position="102"/>
    </location>
    <ligand>
        <name>substrate</name>
    </ligand>
</feature>
<feature type="binding site" evidence="1">
    <location>
        <position position="220"/>
    </location>
    <ligand>
        <name>substrate</name>
    </ligand>
</feature>
<feature type="binding site" evidence="1">
    <location>
        <position position="239"/>
    </location>
    <ligand>
        <name>substrate</name>
    </ligand>
</feature>
<feature type="sequence conflict" description="In Ref. 1." evidence="3" ref="1">
    <original>A</original>
    <variation>T</variation>
    <location>
        <position position="244"/>
    </location>
</feature>
<name>PYRF_MYCMD</name>